<keyword id="KW-0007">Acetylation</keyword>
<keyword id="KW-0143">Chaperone</keyword>
<keyword id="KW-0963">Cytoplasm</keyword>
<keyword id="KW-0217">Developmental protein</keyword>
<keyword id="KW-0221">Differentiation</keyword>
<keyword id="KW-0517">Myogenesis</keyword>
<keyword id="KW-0539">Nucleus</keyword>
<keyword id="KW-1185">Reference proteome</keyword>
<keyword id="KW-0677">Repeat</keyword>
<keyword id="KW-0802">TPR repeat</keyword>
<evidence type="ECO:0000250" key="1"/>
<evidence type="ECO:0000250" key="2">
    <source>
        <dbReference type="UniProtKB" id="Q9H3U1"/>
    </source>
</evidence>
<evidence type="ECO:0000256" key="3">
    <source>
        <dbReference type="SAM" id="MobiDB-lite"/>
    </source>
</evidence>
<evidence type="ECO:0000305" key="4"/>
<gene>
    <name type="primary">Unc45a</name>
    <name type="synonym">Smap1</name>
</gene>
<name>UN45A_RAT</name>
<proteinExistence type="evidence at transcript level"/>
<reference key="1">
    <citation type="journal article" date="2004" name="Genome Res.">
        <title>The status, quality, and expansion of the NIH full-length cDNA project: the Mammalian Gene Collection (MGC).</title>
        <authorList>
            <consortium name="The MGC Project Team"/>
        </authorList>
    </citation>
    <scope>NUCLEOTIDE SEQUENCE [LARGE SCALE MRNA]</scope>
    <source>
        <tissue>Testis</tissue>
    </source>
</reference>
<dbReference type="EMBL" id="BC107919">
    <property type="protein sequence ID" value="AAI07920.1"/>
    <property type="molecule type" value="mRNA"/>
</dbReference>
<dbReference type="RefSeq" id="NP_001032736.1">
    <property type="nucleotide sequence ID" value="NM_001037647.1"/>
</dbReference>
<dbReference type="RefSeq" id="XP_017444655.1">
    <property type="nucleotide sequence ID" value="XM_017589166.1"/>
</dbReference>
<dbReference type="SMR" id="Q32PZ3"/>
<dbReference type="BioGRID" id="259130">
    <property type="interactions" value="1"/>
</dbReference>
<dbReference type="FunCoup" id="Q32PZ3">
    <property type="interactions" value="3999"/>
</dbReference>
<dbReference type="IntAct" id="Q32PZ3">
    <property type="interactions" value="1"/>
</dbReference>
<dbReference type="STRING" id="10116.ENSRNOP00000017407"/>
<dbReference type="PhosphoSitePlus" id="Q32PZ3"/>
<dbReference type="jPOST" id="Q32PZ3"/>
<dbReference type="PaxDb" id="10116-ENSRNOP00000017407"/>
<dbReference type="Ensembl" id="ENSRNOT00000017407.7">
    <property type="protein sequence ID" value="ENSRNOP00000017407.4"/>
    <property type="gene ID" value="ENSRNOG00000012357.7"/>
</dbReference>
<dbReference type="GeneID" id="308759"/>
<dbReference type="KEGG" id="rno:308759"/>
<dbReference type="UCSC" id="RGD:1305357">
    <property type="organism name" value="rat"/>
</dbReference>
<dbReference type="AGR" id="RGD:1305357"/>
<dbReference type="CTD" id="55898"/>
<dbReference type="RGD" id="1305357">
    <property type="gene designation" value="Unc45a"/>
</dbReference>
<dbReference type="eggNOG" id="KOG4151">
    <property type="taxonomic scope" value="Eukaryota"/>
</dbReference>
<dbReference type="GeneTree" id="ENSGT00940000159320"/>
<dbReference type="HOGENOM" id="CLU_007331_0_0_1"/>
<dbReference type="InParanoid" id="Q32PZ3"/>
<dbReference type="OrthoDB" id="41729at9989"/>
<dbReference type="PhylomeDB" id="Q32PZ3"/>
<dbReference type="TreeFam" id="TF314096"/>
<dbReference type="PRO" id="PR:Q32PZ3"/>
<dbReference type="Proteomes" id="UP000002494">
    <property type="component" value="Chromosome 1"/>
</dbReference>
<dbReference type="Bgee" id="ENSRNOG00000012357">
    <property type="expression patterns" value="Expressed in thymus and 19 other cell types or tissues"/>
</dbReference>
<dbReference type="GO" id="GO:0005737">
    <property type="term" value="C:cytoplasm"/>
    <property type="evidence" value="ECO:0000318"/>
    <property type="project" value="GO_Central"/>
</dbReference>
<dbReference type="GO" id="GO:0005634">
    <property type="term" value="C:nucleus"/>
    <property type="evidence" value="ECO:0007669"/>
    <property type="project" value="UniProtKB-SubCell"/>
</dbReference>
<dbReference type="GO" id="GO:0048471">
    <property type="term" value="C:perinuclear region of cytoplasm"/>
    <property type="evidence" value="ECO:0007669"/>
    <property type="project" value="UniProtKB-SubCell"/>
</dbReference>
<dbReference type="GO" id="GO:0051879">
    <property type="term" value="F:Hsp90 protein binding"/>
    <property type="evidence" value="ECO:0000266"/>
    <property type="project" value="RGD"/>
</dbReference>
<dbReference type="GO" id="GO:0030154">
    <property type="term" value="P:cell differentiation"/>
    <property type="evidence" value="ECO:0007669"/>
    <property type="project" value="UniProtKB-KW"/>
</dbReference>
<dbReference type="GO" id="GO:0061077">
    <property type="term" value="P:chaperone-mediated protein folding"/>
    <property type="evidence" value="ECO:0000266"/>
    <property type="project" value="RGD"/>
</dbReference>
<dbReference type="GO" id="GO:0007517">
    <property type="term" value="P:muscle organ development"/>
    <property type="evidence" value="ECO:0007669"/>
    <property type="project" value="UniProtKB-KW"/>
</dbReference>
<dbReference type="FunFam" id="1.25.10.10:FF:000087">
    <property type="entry name" value="Unc-45 myosin chaperone A"/>
    <property type="match status" value="1"/>
</dbReference>
<dbReference type="FunFam" id="1.25.10.10:FF:000043">
    <property type="entry name" value="Unc-45 myosin chaperone B"/>
    <property type="match status" value="1"/>
</dbReference>
<dbReference type="FunFam" id="1.25.40.10:FF:000025">
    <property type="entry name" value="Unc-45 myosin chaperone B"/>
    <property type="match status" value="1"/>
</dbReference>
<dbReference type="Gene3D" id="1.25.10.10">
    <property type="entry name" value="Leucine-rich Repeat Variant"/>
    <property type="match status" value="2"/>
</dbReference>
<dbReference type="Gene3D" id="1.25.40.10">
    <property type="entry name" value="Tetratricopeptide repeat domain"/>
    <property type="match status" value="1"/>
</dbReference>
<dbReference type="InterPro" id="IPR011989">
    <property type="entry name" value="ARM-like"/>
</dbReference>
<dbReference type="InterPro" id="IPR016024">
    <property type="entry name" value="ARM-type_fold"/>
</dbReference>
<dbReference type="InterPro" id="IPR011990">
    <property type="entry name" value="TPR-like_helical_dom_sf"/>
</dbReference>
<dbReference type="InterPro" id="IPR019734">
    <property type="entry name" value="TPR_rpt"/>
</dbReference>
<dbReference type="InterPro" id="IPR024660">
    <property type="entry name" value="UCS_central_dom"/>
</dbReference>
<dbReference type="PANTHER" id="PTHR45994">
    <property type="entry name" value="FI21225P1"/>
    <property type="match status" value="1"/>
</dbReference>
<dbReference type="PANTHER" id="PTHR45994:SF3">
    <property type="entry name" value="PROTEIN UNC-45 HOMOLOG A"/>
    <property type="match status" value="1"/>
</dbReference>
<dbReference type="Pfam" id="PF13432">
    <property type="entry name" value="TPR_16"/>
    <property type="match status" value="1"/>
</dbReference>
<dbReference type="Pfam" id="PF13181">
    <property type="entry name" value="TPR_8"/>
    <property type="match status" value="1"/>
</dbReference>
<dbReference type="Pfam" id="PF11701">
    <property type="entry name" value="UNC45-central"/>
    <property type="match status" value="1"/>
</dbReference>
<dbReference type="SMART" id="SM00028">
    <property type="entry name" value="TPR"/>
    <property type="match status" value="3"/>
</dbReference>
<dbReference type="SUPFAM" id="SSF48371">
    <property type="entry name" value="ARM repeat"/>
    <property type="match status" value="2"/>
</dbReference>
<dbReference type="SUPFAM" id="SSF48452">
    <property type="entry name" value="TPR-like"/>
    <property type="match status" value="1"/>
</dbReference>
<dbReference type="PROSITE" id="PS50005">
    <property type="entry name" value="TPR"/>
    <property type="match status" value="3"/>
</dbReference>
<dbReference type="PROSITE" id="PS50293">
    <property type="entry name" value="TPR_REGION"/>
    <property type="match status" value="1"/>
</dbReference>
<organism>
    <name type="scientific">Rattus norvegicus</name>
    <name type="common">Rat</name>
    <dbReference type="NCBI Taxonomy" id="10116"/>
    <lineage>
        <taxon>Eukaryota</taxon>
        <taxon>Metazoa</taxon>
        <taxon>Chordata</taxon>
        <taxon>Craniata</taxon>
        <taxon>Vertebrata</taxon>
        <taxon>Euteleostomi</taxon>
        <taxon>Mammalia</taxon>
        <taxon>Eutheria</taxon>
        <taxon>Euarchontoglires</taxon>
        <taxon>Glires</taxon>
        <taxon>Rodentia</taxon>
        <taxon>Myomorpha</taxon>
        <taxon>Muroidea</taxon>
        <taxon>Muridae</taxon>
        <taxon>Murinae</taxon>
        <taxon>Rattus</taxon>
    </lineage>
</organism>
<protein>
    <recommendedName>
        <fullName>Protein unc-45 homolog A</fullName>
        <shortName>Unc-45A</shortName>
    </recommendedName>
    <alternativeName>
        <fullName>Smooth muscle cell-associated protein 1</fullName>
        <shortName>SMAP-1</shortName>
    </alternativeName>
</protein>
<sequence length="944" mass="103241">MTVSGPGTPEPRPSDPGASSAEELRKEGNELFKCGDYEGALTAYTQALSLGATPQDQAILHRNRAACHLKLEDYSKAESEASKAIEKDGGDVKALYRRSQALEKLGRLDQAVLDLKRCVSLEPKNKVFQESLRNIGGQIQEKVRYMSSTDAKVEQMFQILLDPKEKGTEKKQKASQNLVVLAREDAGAEKIFRSNGVQLLQRLLDTGETDLMLAALRTLVGICSEHQSRTVATLSVLGTRRVVSILGVENQAVSLAACHLLQVMFDALKEGVKKGFRGKEGAIIVDPARELKVLISNLLELLTEIGVSGQGRDNALTLLIKMVPRKSPKDPNNSLTLWVIDQGLKKILEVGGSVPEAAGELTVTANSRMSASILLSKLFDDLKCDAERENFHRLCENYIRSWFEGQGLAGKLRAIQTVSCLLQGPCDAGNRALELSGVMESVIALCASEQEEEQLVAVEALIHAAGKAKRASFITANGVALLKDLYKGSERDSIRIRALVGLCKLGSAGGTDFSMKQFAEGSTLKLAKQCRKWLCNDQIDAGTRRWAVEGLAYLTFDADVKEEFVEDEAALKALFQLSRSEERSVLFAVGSALVNCTNSYDYEEPDPKMVELAKYAKQHVPEQHPKDKPSFVRARVKKLLAAGVVSAMTCMVKTESPVLTNSCRELLSRVFLALVEEVEDRGTVVAQGGGKALLPLALEGTDVGQTKAAQALAKLTITSNPEMTFPGERIYEVVRPLVSLLHLSCSGLQNFEALMALTNLAGISERLRQKILKEKAVPMIEGYMFEEHEMIRRAATECMCNLAMSKEVQDLFEAQGNDRLKLLVLYSGEDDELLRRAAAGGLAMLTSMRPSLCSRIPQVTTHWLEILQALLLSPNPELQHRGTVVVLNMMESSKEIASTLMESEVLEILSVLAKGEESPVTRAAAACLEKAVEYRLIQPNQDGE</sequence>
<feature type="chain" id="PRO_0000249891" description="Protein unc-45 homolog A">
    <location>
        <begin position="1"/>
        <end position="944"/>
    </location>
</feature>
<feature type="repeat" description="TPR 1">
    <location>
        <begin position="21"/>
        <end position="54"/>
    </location>
</feature>
<feature type="repeat" description="TPR 2">
    <location>
        <begin position="58"/>
        <end position="91"/>
    </location>
</feature>
<feature type="repeat" description="TPR 3">
    <location>
        <begin position="92"/>
        <end position="125"/>
    </location>
</feature>
<feature type="region of interest" description="Disordered" evidence="3">
    <location>
        <begin position="1"/>
        <end position="25"/>
    </location>
</feature>
<feature type="modified residue" description="N6-acetyllysine" evidence="2">
    <location>
        <position position="70"/>
    </location>
</feature>
<feature type="modified residue" description="N6-acetyllysine" evidence="2">
    <location>
        <position position="483"/>
    </location>
</feature>
<accession>Q32PZ3</accession>
<comment type="function">
    <text evidence="1 4">May act as co-chaperone for HSP90 (Potential). Prevents the stimulation of HSP90AB1 ATPase activity by AHSA1. Positive factor in promoting PGR function in the cell (By similarity). May be necessary for proper folding of myosin (Potential). Necessary for normal cell proliferation. Necessary for normal myotube formation and myosin accumulation during muscle cell development. May play a role in erythropoiesis in stroma cells in the spleen (By similarity).</text>
</comment>
<comment type="subunit">
    <text evidence="1">Interacts with PGR isoforms A and B as well as with NR3C1 in the absence of ligand, and with HSP90AB1. Binding to HSP90AB1 involves 2 UNC45A monomers per HSP90AB1 dimer (By similarity).</text>
</comment>
<comment type="subcellular location">
    <subcellularLocation>
        <location evidence="1">Cytoplasm</location>
    </subcellularLocation>
    <subcellularLocation>
        <location evidence="1">Cytoplasm</location>
        <location evidence="1">Perinuclear region</location>
    </subcellularLocation>
    <subcellularLocation>
        <location evidence="1">Nucleus</location>
    </subcellularLocation>
    <text evidence="1">Predominant in the perinuclear region. Little protein in the nucleus (By similarity).</text>
</comment>